<gene>
    <name evidence="1" type="primary">lysS</name>
    <name type="ordered locus">BCE33L0072</name>
</gene>
<protein>
    <recommendedName>
        <fullName evidence="1">Lysine--tRNA ligase</fullName>
        <ecNumber evidence="1">6.1.1.6</ecNumber>
    </recommendedName>
    <alternativeName>
        <fullName evidence="1">Lysyl-tRNA synthetase</fullName>
        <shortName evidence="1">LysRS</shortName>
    </alternativeName>
</protein>
<name>SYK_BACCZ</name>
<accession>Q63HC2</accession>
<sequence>MDNMNHEELNDQLLVRREKLHNLREQGIDPFGKRFERTNATNDLLSLYGEFSKEELEEKEISVSIAGRIMTKRGKGKAGFAHIQDLHGQVQIYVRKDAVGDEEYELFKTADLGDLVGIEGKVFKTNVGELSVKATGFTLLTKSLRPLPDKYHGLKDVEQRYRQRYLDLITSMESRETFVTRSKIIREMRRYLDDNGYLEVETPMMHAIAGGASARPFITHHNALDMELYMRIAIELHLKRLIVGGLEKVYEIGRVFRNEGVSTRHNPEFTMIELYEAYADYKDIMKLTENMVAHIAKQVLGTTTIQYGDYEINLEPEWTRLHMVDAIKEHSGADFWNPMSVEEARELAKEHNVEIKDTMEVGHIINEFFEQKVEDKLIQPTFIYGHPVEISPLAKKNDEDPRFTDRFELFIVAREHANAFTELNDPIDQKERFEAQLKEREQGNDEAHMMDDDYIEALEYGMPPTGGLGIGIDRLVMLLTNAPSIRDVLLFPAMRHKQD</sequence>
<feature type="chain" id="PRO_1000012843" description="Lysine--tRNA ligase">
    <location>
        <begin position="1"/>
        <end position="499"/>
    </location>
</feature>
<feature type="binding site" evidence="1">
    <location>
        <position position="408"/>
    </location>
    <ligand>
        <name>Mg(2+)</name>
        <dbReference type="ChEBI" id="CHEBI:18420"/>
        <label>1</label>
    </ligand>
</feature>
<feature type="binding site" evidence="1">
    <location>
        <position position="415"/>
    </location>
    <ligand>
        <name>Mg(2+)</name>
        <dbReference type="ChEBI" id="CHEBI:18420"/>
        <label>1</label>
    </ligand>
</feature>
<feature type="binding site" evidence="1">
    <location>
        <position position="415"/>
    </location>
    <ligand>
        <name>Mg(2+)</name>
        <dbReference type="ChEBI" id="CHEBI:18420"/>
        <label>2</label>
    </ligand>
</feature>
<evidence type="ECO:0000255" key="1">
    <source>
        <dbReference type="HAMAP-Rule" id="MF_00252"/>
    </source>
</evidence>
<comment type="catalytic activity">
    <reaction evidence="1">
        <text>tRNA(Lys) + L-lysine + ATP = L-lysyl-tRNA(Lys) + AMP + diphosphate</text>
        <dbReference type="Rhea" id="RHEA:20792"/>
        <dbReference type="Rhea" id="RHEA-COMP:9696"/>
        <dbReference type="Rhea" id="RHEA-COMP:9697"/>
        <dbReference type="ChEBI" id="CHEBI:30616"/>
        <dbReference type="ChEBI" id="CHEBI:32551"/>
        <dbReference type="ChEBI" id="CHEBI:33019"/>
        <dbReference type="ChEBI" id="CHEBI:78442"/>
        <dbReference type="ChEBI" id="CHEBI:78529"/>
        <dbReference type="ChEBI" id="CHEBI:456215"/>
        <dbReference type="EC" id="6.1.1.6"/>
    </reaction>
</comment>
<comment type="cofactor">
    <cofactor evidence="1">
        <name>Mg(2+)</name>
        <dbReference type="ChEBI" id="CHEBI:18420"/>
    </cofactor>
    <text evidence="1">Binds 3 Mg(2+) ions per subunit.</text>
</comment>
<comment type="subunit">
    <text evidence="1">Homodimer.</text>
</comment>
<comment type="subcellular location">
    <subcellularLocation>
        <location evidence="1">Cytoplasm</location>
    </subcellularLocation>
</comment>
<comment type="similarity">
    <text evidence="1">Belongs to the class-II aminoacyl-tRNA synthetase family.</text>
</comment>
<dbReference type="EC" id="6.1.1.6" evidence="1"/>
<dbReference type="EMBL" id="CP000001">
    <property type="protein sequence ID" value="AAU20158.1"/>
    <property type="molecule type" value="Genomic_DNA"/>
</dbReference>
<dbReference type="RefSeq" id="WP_000369671.1">
    <property type="nucleotide sequence ID" value="NZ_CP009968.1"/>
</dbReference>
<dbReference type="SMR" id="Q63HC2"/>
<dbReference type="GeneID" id="45020119"/>
<dbReference type="KEGG" id="bcz:BCE33L0072"/>
<dbReference type="PATRIC" id="fig|288681.22.peg.81"/>
<dbReference type="Proteomes" id="UP000002612">
    <property type="component" value="Chromosome"/>
</dbReference>
<dbReference type="GO" id="GO:0005829">
    <property type="term" value="C:cytosol"/>
    <property type="evidence" value="ECO:0007669"/>
    <property type="project" value="TreeGrafter"/>
</dbReference>
<dbReference type="GO" id="GO:0005524">
    <property type="term" value="F:ATP binding"/>
    <property type="evidence" value="ECO:0007669"/>
    <property type="project" value="UniProtKB-UniRule"/>
</dbReference>
<dbReference type="GO" id="GO:0140096">
    <property type="term" value="F:catalytic activity, acting on a protein"/>
    <property type="evidence" value="ECO:0007669"/>
    <property type="project" value="UniProtKB-ARBA"/>
</dbReference>
<dbReference type="GO" id="GO:0004824">
    <property type="term" value="F:lysine-tRNA ligase activity"/>
    <property type="evidence" value="ECO:0007669"/>
    <property type="project" value="UniProtKB-UniRule"/>
</dbReference>
<dbReference type="GO" id="GO:0000287">
    <property type="term" value="F:magnesium ion binding"/>
    <property type="evidence" value="ECO:0007669"/>
    <property type="project" value="UniProtKB-UniRule"/>
</dbReference>
<dbReference type="GO" id="GO:0016740">
    <property type="term" value="F:transferase activity"/>
    <property type="evidence" value="ECO:0007669"/>
    <property type="project" value="UniProtKB-ARBA"/>
</dbReference>
<dbReference type="GO" id="GO:0000049">
    <property type="term" value="F:tRNA binding"/>
    <property type="evidence" value="ECO:0007669"/>
    <property type="project" value="TreeGrafter"/>
</dbReference>
<dbReference type="GO" id="GO:0006430">
    <property type="term" value="P:lysyl-tRNA aminoacylation"/>
    <property type="evidence" value="ECO:0007669"/>
    <property type="project" value="UniProtKB-UniRule"/>
</dbReference>
<dbReference type="CDD" id="cd00775">
    <property type="entry name" value="LysRS_core"/>
    <property type="match status" value="1"/>
</dbReference>
<dbReference type="CDD" id="cd04322">
    <property type="entry name" value="LysRS_N"/>
    <property type="match status" value="1"/>
</dbReference>
<dbReference type="FunFam" id="2.40.50.140:FF:000024">
    <property type="entry name" value="Lysine--tRNA ligase"/>
    <property type="match status" value="1"/>
</dbReference>
<dbReference type="FunFam" id="3.30.930.10:FF:000001">
    <property type="entry name" value="Lysine--tRNA ligase"/>
    <property type="match status" value="1"/>
</dbReference>
<dbReference type="Gene3D" id="3.30.930.10">
    <property type="entry name" value="Bira Bifunctional Protein, Domain 2"/>
    <property type="match status" value="1"/>
</dbReference>
<dbReference type="Gene3D" id="2.40.50.140">
    <property type="entry name" value="Nucleic acid-binding proteins"/>
    <property type="match status" value="1"/>
</dbReference>
<dbReference type="HAMAP" id="MF_00252">
    <property type="entry name" value="Lys_tRNA_synth_class2"/>
    <property type="match status" value="1"/>
</dbReference>
<dbReference type="InterPro" id="IPR004364">
    <property type="entry name" value="Aa-tRNA-synt_II"/>
</dbReference>
<dbReference type="InterPro" id="IPR006195">
    <property type="entry name" value="aa-tRNA-synth_II"/>
</dbReference>
<dbReference type="InterPro" id="IPR045864">
    <property type="entry name" value="aa-tRNA-synth_II/BPL/LPL"/>
</dbReference>
<dbReference type="InterPro" id="IPR002313">
    <property type="entry name" value="Lys-tRNA-ligase_II"/>
</dbReference>
<dbReference type="InterPro" id="IPR034762">
    <property type="entry name" value="Lys-tRNA-ligase_II_bac/euk"/>
</dbReference>
<dbReference type="InterPro" id="IPR044136">
    <property type="entry name" value="Lys-tRNA-ligase_II_N"/>
</dbReference>
<dbReference type="InterPro" id="IPR018149">
    <property type="entry name" value="Lys-tRNA-synth_II_C"/>
</dbReference>
<dbReference type="InterPro" id="IPR012340">
    <property type="entry name" value="NA-bd_OB-fold"/>
</dbReference>
<dbReference type="InterPro" id="IPR004365">
    <property type="entry name" value="NA-bd_OB_tRNA"/>
</dbReference>
<dbReference type="NCBIfam" id="TIGR00499">
    <property type="entry name" value="lysS_bact"/>
    <property type="match status" value="1"/>
</dbReference>
<dbReference type="NCBIfam" id="NF001756">
    <property type="entry name" value="PRK00484.1"/>
    <property type="match status" value="1"/>
</dbReference>
<dbReference type="PANTHER" id="PTHR42918:SF15">
    <property type="entry name" value="LYSINE--TRNA LIGASE, CHLOROPLASTIC_MITOCHONDRIAL"/>
    <property type="match status" value="1"/>
</dbReference>
<dbReference type="PANTHER" id="PTHR42918">
    <property type="entry name" value="LYSYL-TRNA SYNTHETASE"/>
    <property type="match status" value="1"/>
</dbReference>
<dbReference type="Pfam" id="PF00152">
    <property type="entry name" value="tRNA-synt_2"/>
    <property type="match status" value="1"/>
</dbReference>
<dbReference type="Pfam" id="PF01336">
    <property type="entry name" value="tRNA_anti-codon"/>
    <property type="match status" value="1"/>
</dbReference>
<dbReference type="PIRSF" id="PIRSF039101">
    <property type="entry name" value="LysRS2"/>
    <property type="match status" value="1"/>
</dbReference>
<dbReference type="PRINTS" id="PR00982">
    <property type="entry name" value="TRNASYNTHLYS"/>
</dbReference>
<dbReference type="SUPFAM" id="SSF55681">
    <property type="entry name" value="Class II aaRS and biotin synthetases"/>
    <property type="match status" value="1"/>
</dbReference>
<dbReference type="SUPFAM" id="SSF50249">
    <property type="entry name" value="Nucleic acid-binding proteins"/>
    <property type="match status" value="1"/>
</dbReference>
<dbReference type="PROSITE" id="PS50862">
    <property type="entry name" value="AA_TRNA_LIGASE_II"/>
    <property type="match status" value="1"/>
</dbReference>
<proteinExistence type="inferred from homology"/>
<organism>
    <name type="scientific">Bacillus cereus (strain ZK / E33L)</name>
    <dbReference type="NCBI Taxonomy" id="288681"/>
    <lineage>
        <taxon>Bacteria</taxon>
        <taxon>Bacillati</taxon>
        <taxon>Bacillota</taxon>
        <taxon>Bacilli</taxon>
        <taxon>Bacillales</taxon>
        <taxon>Bacillaceae</taxon>
        <taxon>Bacillus</taxon>
        <taxon>Bacillus cereus group</taxon>
    </lineage>
</organism>
<reference key="1">
    <citation type="journal article" date="2006" name="J. Bacteriol.">
        <title>Pathogenomic sequence analysis of Bacillus cereus and Bacillus thuringiensis isolates closely related to Bacillus anthracis.</title>
        <authorList>
            <person name="Han C.S."/>
            <person name="Xie G."/>
            <person name="Challacombe J.F."/>
            <person name="Altherr M.R."/>
            <person name="Bhotika S.S."/>
            <person name="Bruce D."/>
            <person name="Campbell C.S."/>
            <person name="Campbell M.L."/>
            <person name="Chen J."/>
            <person name="Chertkov O."/>
            <person name="Cleland C."/>
            <person name="Dimitrijevic M."/>
            <person name="Doggett N.A."/>
            <person name="Fawcett J.J."/>
            <person name="Glavina T."/>
            <person name="Goodwin L.A."/>
            <person name="Hill K.K."/>
            <person name="Hitchcock P."/>
            <person name="Jackson P.J."/>
            <person name="Keim P."/>
            <person name="Kewalramani A.R."/>
            <person name="Longmire J."/>
            <person name="Lucas S."/>
            <person name="Malfatti S."/>
            <person name="McMurry K."/>
            <person name="Meincke L.J."/>
            <person name="Misra M."/>
            <person name="Moseman B.L."/>
            <person name="Mundt M."/>
            <person name="Munk A.C."/>
            <person name="Okinaka R.T."/>
            <person name="Parson-Quintana B."/>
            <person name="Reilly L.P."/>
            <person name="Richardson P."/>
            <person name="Robinson D.L."/>
            <person name="Rubin E."/>
            <person name="Saunders E."/>
            <person name="Tapia R."/>
            <person name="Tesmer J.G."/>
            <person name="Thayer N."/>
            <person name="Thompson L.S."/>
            <person name="Tice H."/>
            <person name="Ticknor L.O."/>
            <person name="Wills P.L."/>
            <person name="Brettin T.S."/>
            <person name="Gilna P."/>
        </authorList>
    </citation>
    <scope>NUCLEOTIDE SEQUENCE [LARGE SCALE GENOMIC DNA]</scope>
    <source>
        <strain>ZK / E33L</strain>
    </source>
</reference>
<keyword id="KW-0030">Aminoacyl-tRNA synthetase</keyword>
<keyword id="KW-0067">ATP-binding</keyword>
<keyword id="KW-0963">Cytoplasm</keyword>
<keyword id="KW-0436">Ligase</keyword>
<keyword id="KW-0460">Magnesium</keyword>
<keyword id="KW-0479">Metal-binding</keyword>
<keyword id="KW-0547">Nucleotide-binding</keyword>
<keyword id="KW-0648">Protein biosynthesis</keyword>